<accession>Q2RPV0</accession>
<evidence type="ECO:0000255" key="1">
    <source>
        <dbReference type="HAMAP-Rule" id="MF_00272"/>
    </source>
</evidence>
<evidence type="ECO:0000255" key="2">
    <source>
        <dbReference type="PROSITE-ProRule" id="PRU01066"/>
    </source>
</evidence>
<protein>
    <recommendedName>
        <fullName evidence="1">Glycine cleavage system H protein</fullName>
    </recommendedName>
</protein>
<sequence length="126" mass="13702">MSKLYFTEDHEWVSVDDDGIGTIGITDYAQKQLGDVVFVELPEIGREIERGGDAAVVESVKAASEVYSPVSGEVVEANDSLPEAPGQVNTDALGDGWFFKVRLSEPAELDELMDQEAYDAFVGELD</sequence>
<dbReference type="EMBL" id="CP000230">
    <property type="protein sequence ID" value="ABC23845.1"/>
    <property type="molecule type" value="Genomic_DNA"/>
</dbReference>
<dbReference type="RefSeq" id="WP_011390798.1">
    <property type="nucleotide sequence ID" value="NC_007643.1"/>
</dbReference>
<dbReference type="RefSeq" id="YP_428132.1">
    <property type="nucleotide sequence ID" value="NC_007643.1"/>
</dbReference>
<dbReference type="SMR" id="Q2RPV0"/>
<dbReference type="STRING" id="269796.Rru_A3050"/>
<dbReference type="EnsemblBacteria" id="ABC23845">
    <property type="protein sequence ID" value="ABC23845"/>
    <property type="gene ID" value="Rru_A3050"/>
</dbReference>
<dbReference type="KEGG" id="rru:Rru_A3050"/>
<dbReference type="PATRIC" id="fig|269796.9.peg.3160"/>
<dbReference type="eggNOG" id="COG0509">
    <property type="taxonomic scope" value="Bacteria"/>
</dbReference>
<dbReference type="HOGENOM" id="CLU_097408_2_0_5"/>
<dbReference type="PhylomeDB" id="Q2RPV0"/>
<dbReference type="Proteomes" id="UP000001929">
    <property type="component" value="Chromosome"/>
</dbReference>
<dbReference type="GO" id="GO:0005829">
    <property type="term" value="C:cytosol"/>
    <property type="evidence" value="ECO:0007669"/>
    <property type="project" value="TreeGrafter"/>
</dbReference>
<dbReference type="GO" id="GO:0005960">
    <property type="term" value="C:glycine cleavage complex"/>
    <property type="evidence" value="ECO:0007669"/>
    <property type="project" value="InterPro"/>
</dbReference>
<dbReference type="GO" id="GO:0019464">
    <property type="term" value="P:glycine decarboxylation via glycine cleavage system"/>
    <property type="evidence" value="ECO:0007669"/>
    <property type="project" value="UniProtKB-UniRule"/>
</dbReference>
<dbReference type="CDD" id="cd06848">
    <property type="entry name" value="GCS_H"/>
    <property type="match status" value="1"/>
</dbReference>
<dbReference type="Gene3D" id="2.40.50.100">
    <property type="match status" value="1"/>
</dbReference>
<dbReference type="HAMAP" id="MF_00272">
    <property type="entry name" value="GcvH"/>
    <property type="match status" value="1"/>
</dbReference>
<dbReference type="InterPro" id="IPR003016">
    <property type="entry name" value="2-oxoA_DH_lipoyl-BS"/>
</dbReference>
<dbReference type="InterPro" id="IPR000089">
    <property type="entry name" value="Biotin_lipoyl"/>
</dbReference>
<dbReference type="InterPro" id="IPR002930">
    <property type="entry name" value="GCV_H"/>
</dbReference>
<dbReference type="InterPro" id="IPR033753">
    <property type="entry name" value="GCV_H/Fam206"/>
</dbReference>
<dbReference type="InterPro" id="IPR017453">
    <property type="entry name" value="GCV_H_sub"/>
</dbReference>
<dbReference type="InterPro" id="IPR011053">
    <property type="entry name" value="Single_hybrid_motif"/>
</dbReference>
<dbReference type="NCBIfam" id="TIGR00527">
    <property type="entry name" value="gcvH"/>
    <property type="match status" value="1"/>
</dbReference>
<dbReference type="NCBIfam" id="NF002270">
    <property type="entry name" value="PRK01202.1"/>
    <property type="match status" value="1"/>
</dbReference>
<dbReference type="PANTHER" id="PTHR11715">
    <property type="entry name" value="GLYCINE CLEAVAGE SYSTEM H PROTEIN"/>
    <property type="match status" value="1"/>
</dbReference>
<dbReference type="PANTHER" id="PTHR11715:SF3">
    <property type="entry name" value="GLYCINE CLEAVAGE SYSTEM H PROTEIN-RELATED"/>
    <property type="match status" value="1"/>
</dbReference>
<dbReference type="Pfam" id="PF01597">
    <property type="entry name" value="GCV_H"/>
    <property type="match status" value="1"/>
</dbReference>
<dbReference type="SUPFAM" id="SSF51230">
    <property type="entry name" value="Single hybrid motif"/>
    <property type="match status" value="1"/>
</dbReference>
<dbReference type="PROSITE" id="PS50968">
    <property type="entry name" value="BIOTINYL_LIPOYL"/>
    <property type="match status" value="1"/>
</dbReference>
<dbReference type="PROSITE" id="PS00189">
    <property type="entry name" value="LIPOYL"/>
    <property type="match status" value="1"/>
</dbReference>
<organism>
    <name type="scientific">Rhodospirillum rubrum (strain ATCC 11170 / ATH 1.1.1 / DSM 467 / LMG 4362 / NCIMB 8255 / S1)</name>
    <dbReference type="NCBI Taxonomy" id="269796"/>
    <lineage>
        <taxon>Bacteria</taxon>
        <taxon>Pseudomonadati</taxon>
        <taxon>Pseudomonadota</taxon>
        <taxon>Alphaproteobacteria</taxon>
        <taxon>Rhodospirillales</taxon>
        <taxon>Rhodospirillaceae</taxon>
        <taxon>Rhodospirillum</taxon>
    </lineage>
</organism>
<proteinExistence type="inferred from homology"/>
<feature type="chain" id="PRO_0000302425" description="Glycine cleavage system H protein">
    <location>
        <begin position="1"/>
        <end position="126"/>
    </location>
</feature>
<feature type="domain" description="Lipoyl-binding" evidence="2">
    <location>
        <begin position="20"/>
        <end position="102"/>
    </location>
</feature>
<feature type="modified residue" description="N6-lipoyllysine" evidence="1">
    <location>
        <position position="61"/>
    </location>
</feature>
<gene>
    <name evidence="1" type="primary">gcvH</name>
    <name type="ordered locus">Rru_A3050</name>
</gene>
<name>GCSH_RHORT</name>
<keyword id="KW-0450">Lipoyl</keyword>
<keyword id="KW-1185">Reference proteome</keyword>
<reference key="1">
    <citation type="journal article" date="2011" name="Stand. Genomic Sci.">
        <title>Complete genome sequence of Rhodospirillum rubrum type strain (S1).</title>
        <authorList>
            <person name="Munk A.C."/>
            <person name="Copeland A."/>
            <person name="Lucas S."/>
            <person name="Lapidus A."/>
            <person name="Del Rio T.G."/>
            <person name="Barry K."/>
            <person name="Detter J.C."/>
            <person name="Hammon N."/>
            <person name="Israni S."/>
            <person name="Pitluck S."/>
            <person name="Brettin T."/>
            <person name="Bruce D."/>
            <person name="Han C."/>
            <person name="Tapia R."/>
            <person name="Gilna P."/>
            <person name="Schmutz J."/>
            <person name="Larimer F."/>
            <person name="Land M."/>
            <person name="Kyrpides N.C."/>
            <person name="Mavromatis K."/>
            <person name="Richardson P."/>
            <person name="Rohde M."/>
            <person name="Goeker M."/>
            <person name="Klenk H.P."/>
            <person name="Zhang Y."/>
            <person name="Roberts G.P."/>
            <person name="Reslewic S."/>
            <person name="Schwartz D.C."/>
        </authorList>
    </citation>
    <scope>NUCLEOTIDE SEQUENCE [LARGE SCALE GENOMIC DNA]</scope>
    <source>
        <strain>ATCC 11170 / ATH 1.1.1 / DSM 467 / LMG 4362 / NCIMB 8255 / S1</strain>
    </source>
</reference>
<comment type="function">
    <text evidence="1">The glycine cleavage system catalyzes the degradation of glycine. The H protein shuttles the methylamine group of glycine from the P protein to the T protein.</text>
</comment>
<comment type="cofactor">
    <cofactor evidence="1">
        <name>(R)-lipoate</name>
        <dbReference type="ChEBI" id="CHEBI:83088"/>
    </cofactor>
    <text evidence="1">Binds 1 lipoyl cofactor covalently.</text>
</comment>
<comment type="subunit">
    <text evidence="1">The glycine cleavage system is composed of four proteins: P, T, L and H.</text>
</comment>
<comment type="similarity">
    <text evidence="1">Belongs to the GcvH family.</text>
</comment>